<organism>
    <name type="scientific">Synechocystis sp. (strain ATCC 27184 / PCC 6803 / Kazusa)</name>
    <dbReference type="NCBI Taxonomy" id="1111708"/>
    <lineage>
        <taxon>Bacteria</taxon>
        <taxon>Bacillati</taxon>
        <taxon>Cyanobacteriota</taxon>
        <taxon>Cyanophyceae</taxon>
        <taxon>Synechococcales</taxon>
        <taxon>Merismopediaceae</taxon>
        <taxon>Synechocystis</taxon>
    </lineage>
</organism>
<sequence>MGEEPVPADKALGKKFKKKNASWSIEESEALYRVEAWGAPYFAINAAGNITVSPNGDRGGSLDLLELVEALRQRKLGLPLLIRFSDILADRLERLNSCFAKAIARYNYPNTYQAVYPVKCNQQRHLVEALVRFGQTSQCGLEAGSKPELMIALATLPPPLDRQDKHTKPLIICNGYKDQDYLETALLAKRLGHRPIIIIEQLRELEWVLHISQQLNIKPMLGVRARLSCQSLKSSEISSGNGDRAKLGLTMPDIVTVIHRLEENNCLDCLKMLHFHLGTQVSDIALIKEAMREASQLYVELVKLGAKMRYLNVGGGLAVDYDGSKTNYPASKNYNMQNYANDIVAAIQDACELGQVSPPILVSESGRAIMAHQSVLVFDVLGSNQTGFSEPHPPDENAHPLLKNLWECYETITAEQYQEQYHDALQLKTEASSLFNFGYLSLTERGQAEQIHWACCRKIFEITRQLEYIPEDFQALDKIMTDIYYVNLSVFQSAPESWSLDQLFPILPIHHLNEKPSQRVILADLTCDSDGKIDRFIDLWDVKSYLEVHPLENDGNPYYLGMFLVGAYQEIMGNLHNLFGDINVVHIATTPQGYQIESVVRGDTMTEVLGYVQYDSDDLLEGLRRHTELALSNGQITLEESRRLLEDYEQSLRRYTYLS</sequence>
<protein>
    <recommendedName>
        <fullName>Biosynthetic arginine decarboxylase 2</fullName>
        <shortName>ADC 2</shortName>
        <ecNumber>4.1.1.19</ecNumber>
    </recommendedName>
</protein>
<feature type="chain" id="PRO_0000149982" description="Biosynthetic arginine decarboxylase 2">
    <location>
        <begin position="1"/>
        <end position="659"/>
    </location>
</feature>
<feature type="binding site" evidence="2">
    <location>
        <begin position="311"/>
        <end position="321"/>
    </location>
    <ligand>
        <name>substrate</name>
    </ligand>
</feature>
<feature type="modified residue" description="N6-(pyridoxal phosphate)lysine" evidence="1">
    <location>
        <position position="119"/>
    </location>
</feature>
<name>SPEA2_SYNY3</name>
<reference key="1">
    <citation type="journal article" date="1996" name="DNA Res.">
        <title>Sequence analysis of the genome of the unicellular cyanobacterium Synechocystis sp. strain PCC6803. II. Sequence determination of the entire genome and assignment of potential protein-coding regions.</title>
        <authorList>
            <person name="Kaneko T."/>
            <person name="Sato S."/>
            <person name="Kotani H."/>
            <person name="Tanaka A."/>
            <person name="Asamizu E."/>
            <person name="Nakamura Y."/>
            <person name="Miyajima N."/>
            <person name="Hirosawa M."/>
            <person name="Sugiura M."/>
            <person name="Sasamoto S."/>
            <person name="Kimura T."/>
            <person name="Hosouchi T."/>
            <person name="Matsuno A."/>
            <person name="Muraki A."/>
            <person name="Nakazaki N."/>
            <person name="Naruo K."/>
            <person name="Okumura S."/>
            <person name="Shimpo S."/>
            <person name="Takeuchi C."/>
            <person name="Wada T."/>
            <person name="Watanabe A."/>
            <person name="Yamada M."/>
            <person name="Yasuda M."/>
            <person name="Tabata S."/>
        </authorList>
    </citation>
    <scope>NUCLEOTIDE SEQUENCE [LARGE SCALE GENOMIC DNA]</scope>
    <source>
        <strain>ATCC 27184 / PCC 6803 / Kazusa</strain>
    </source>
</reference>
<reference key="2">
    <citation type="journal article" date="1998" name="Bot. Acta">
        <title>Disruption of a spe-like open reading frame alters polyamine content and psbA-2 mRNA stability in the cyanobacterium Synechocystis sp. PCC 6803.</title>
        <authorList>
            <person name="Mulo P."/>
            <person name="Eloranta T."/>
            <person name="Aro E.M."/>
            <person name="Maenpaeae P."/>
        </authorList>
    </citation>
    <scope>NUCLEOTIDE SEQUENCE [GENOMIC DNA] OF 1-302</scope>
</reference>
<dbReference type="EC" id="4.1.1.19"/>
<dbReference type="EMBL" id="BA000022">
    <property type="protein sequence ID" value="BAA16587.1"/>
    <property type="molecule type" value="Genomic_DNA"/>
</dbReference>
<dbReference type="EMBL" id="X96602">
    <property type="protein sequence ID" value="CAA65422.1"/>
    <property type="molecule type" value="Genomic_DNA"/>
</dbReference>
<dbReference type="PIR" id="S74435">
    <property type="entry name" value="S74435"/>
</dbReference>
<dbReference type="SMR" id="P72587"/>
<dbReference type="STRING" id="1148.gene:10497442"/>
<dbReference type="PaxDb" id="1148-1651659"/>
<dbReference type="EnsemblBacteria" id="BAA16587">
    <property type="protein sequence ID" value="BAA16587"/>
    <property type="gene ID" value="BAA16587"/>
</dbReference>
<dbReference type="KEGG" id="syn:slr1312"/>
<dbReference type="eggNOG" id="COG1166">
    <property type="taxonomic scope" value="Bacteria"/>
</dbReference>
<dbReference type="InParanoid" id="P72587"/>
<dbReference type="PhylomeDB" id="P72587"/>
<dbReference type="BRENDA" id="4.1.1.19">
    <property type="organism ID" value="6192"/>
</dbReference>
<dbReference type="Proteomes" id="UP000001425">
    <property type="component" value="Chromosome"/>
</dbReference>
<dbReference type="GO" id="GO:0008792">
    <property type="term" value="F:arginine decarboxylase activity"/>
    <property type="evidence" value="ECO:0007669"/>
    <property type="project" value="UniProtKB-UniRule"/>
</dbReference>
<dbReference type="GO" id="GO:0046872">
    <property type="term" value="F:metal ion binding"/>
    <property type="evidence" value="ECO:0007669"/>
    <property type="project" value="UniProtKB-KW"/>
</dbReference>
<dbReference type="GO" id="GO:0006527">
    <property type="term" value="P:arginine catabolic process"/>
    <property type="evidence" value="ECO:0007669"/>
    <property type="project" value="InterPro"/>
</dbReference>
<dbReference type="GO" id="GO:0008295">
    <property type="term" value="P:spermidine biosynthetic process"/>
    <property type="evidence" value="ECO:0007669"/>
    <property type="project" value="UniProtKB-UniRule"/>
</dbReference>
<dbReference type="CDD" id="cd06830">
    <property type="entry name" value="PLPDE_III_ADC"/>
    <property type="match status" value="1"/>
</dbReference>
<dbReference type="FunFam" id="1.20.58.930:FF:000002">
    <property type="entry name" value="Biosynthetic arginine decarboxylase"/>
    <property type="match status" value="1"/>
</dbReference>
<dbReference type="Gene3D" id="1.10.287.3440">
    <property type="match status" value="1"/>
</dbReference>
<dbReference type="Gene3D" id="1.20.58.930">
    <property type="match status" value="1"/>
</dbReference>
<dbReference type="Gene3D" id="3.20.20.10">
    <property type="entry name" value="Alanine racemase"/>
    <property type="match status" value="1"/>
</dbReference>
<dbReference type="Gene3D" id="2.40.37.10">
    <property type="entry name" value="Lyase, Ornithine Decarboxylase, Chain A, domain 1"/>
    <property type="match status" value="1"/>
</dbReference>
<dbReference type="HAMAP" id="MF_01417">
    <property type="entry name" value="SpeA"/>
    <property type="match status" value="1"/>
</dbReference>
<dbReference type="InterPro" id="IPR009006">
    <property type="entry name" value="Ala_racemase/Decarboxylase_C"/>
</dbReference>
<dbReference type="InterPro" id="IPR040634">
    <property type="entry name" value="Arg_decarb_HB"/>
</dbReference>
<dbReference type="InterPro" id="IPR041128">
    <property type="entry name" value="Arg_decarbox_C"/>
</dbReference>
<dbReference type="InterPro" id="IPR002985">
    <property type="entry name" value="Arg_decrbxlase"/>
</dbReference>
<dbReference type="InterPro" id="IPR022644">
    <property type="entry name" value="De-COase2_N"/>
</dbReference>
<dbReference type="InterPro" id="IPR022653">
    <property type="entry name" value="De-COase2_pyr-phos_BS"/>
</dbReference>
<dbReference type="InterPro" id="IPR000183">
    <property type="entry name" value="Orn/DAP/Arg_de-COase"/>
</dbReference>
<dbReference type="InterPro" id="IPR029066">
    <property type="entry name" value="PLP-binding_barrel"/>
</dbReference>
<dbReference type="NCBIfam" id="NF003763">
    <property type="entry name" value="PRK05354.1"/>
    <property type="match status" value="1"/>
</dbReference>
<dbReference type="NCBIfam" id="TIGR01273">
    <property type="entry name" value="speA"/>
    <property type="match status" value="1"/>
</dbReference>
<dbReference type="PANTHER" id="PTHR43295">
    <property type="entry name" value="ARGININE DECARBOXYLASE"/>
    <property type="match status" value="1"/>
</dbReference>
<dbReference type="PANTHER" id="PTHR43295:SF9">
    <property type="entry name" value="BIOSYNTHETIC ARGININE DECARBOXYLASE"/>
    <property type="match status" value="1"/>
</dbReference>
<dbReference type="Pfam" id="PF17810">
    <property type="entry name" value="Arg_decarb_HB"/>
    <property type="match status" value="1"/>
</dbReference>
<dbReference type="Pfam" id="PF17944">
    <property type="entry name" value="Arg_decarbox_C"/>
    <property type="match status" value="1"/>
</dbReference>
<dbReference type="Pfam" id="PF02784">
    <property type="entry name" value="Orn_Arg_deC_N"/>
    <property type="match status" value="1"/>
</dbReference>
<dbReference type="PIRSF" id="PIRSF001336">
    <property type="entry name" value="Arg_decrbxlase"/>
    <property type="match status" value="1"/>
</dbReference>
<dbReference type="PRINTS" id="PR01180">
    <property type="entry name" value="ARGDCRBXLASE"/>
</dbReference>
<dbReference type="PRINTS" id="PR01179">
    <property type="entry name" value="ODADCRBXLASE"/>
</dbReference>
<dbReference type="SUPFAM" id="SSF50621">
    <property type="entry name" value="Alanine racemase C-terminal domain-like"/>
    <property type="match status" value="1"/>
</dbReference>
<dbReference type="SUPFAM" id="SSF51419">
    <property type="entry name" value="PLP-binding barrel"/>
    <property type="match status" value="1"/>
</dbReference>
<dbReference type="PROSITE" id="PS00878">
    <property type="entry name" value="ODR_DC_2_1"/>
    <property type="match status" value="1"/>
</dbReference>
<evidence type="ECO:0000250" key="1"/>
<evidence type="ECO:0000255" key="2"/>
<evidence type="ECO:0000305" key="3"/>
<proteinExistence type="inferred from homology"/>
<keyword id="KW-0210">Decarboxylase</keyword>
<keyword id="KW-0456">Lyase</keyword>
<keyword id="KW-0460">Magnesium</keyword>
<keyword id="KW-0479">Metal-binding</keyword>
<keyword id="KW-0620">Polyamine biosynthesis</keyword>
<keyword id="KW-0663">Pyridoxal phosphate</keyword>
<keyword id="KW-1185">Reference proteome</keyword>
<keyword id="KW-0745">Spermidine biosynthesis</keyword>
<gene>
    <name type="primary">speA2</name>
    <name type="synonym">speA</name>
    <name type="ordered locus">slr1312</name>
</gene>
<comment type="function">
    <text evidence="1">Catalyzes the biosynthesis of agmatine from arginine.</text>
</comment>
<comment type="catalytic activity">
    <reaction>
        <text>L-arginine + H(+) = agmatine + CO2</text>
        <dbReference type="Rhea" id="RHEA:17641"/>
        <dbReference type="ChEBI" id="CHEBI:15378"/>
        <dbReference type="ChEBI" id="CHEBI:16526"/>
        <dbReference type="ChEBI" id="CHEBI:32682"/>
        <dbReference type="ChEBI" id="CHEBI:58145"/>
        <dbReference type="EC" id="4.1.1.19"/>
    </reaction>
</comment>
<comment type="cofactor">
    <cofactor evidence="1">
        <name>Mg(2+)</name>
        <dbReference type="ChEBI" id="CHEBI:18420"/>
    </cofactor>
</comment>
<comment type="cofactor">
    <cofactor evidence="1">
        <name>pyridoxal 5'-phosphate</name>
        <dbReference type="ChEBI" id="CHEBI:597326"/>
    </cofactor>
</comment>
<comment type="similarity">
    <text evidence="3">Belongs to the Orn/Lys/Arg decarboxylase class-II family. SpeA subfamily.</text>
</comment>
<accession>P72587</accession>